<keyword id="KW-0324">Glycolysis</keyword>
<keyword id="KW-0413">Isomerase</keyword>
<organism>
    <name type="scientific">Thermus thermophilus (strain ATCC BAA-163 / DSM 7039 / HB27)</name>
    <dbReference type="NCBI Taxonomy" id="262724"/>
    <lineage>
        <taxon>Bacteria</taxon>
        <taxon>Thermotogati</taxon>
        <taxon>Deinococcota</taxon>
        <taxon>Deinococci</taxon>
        <taxon>Thermales</taxon>
        <taxon>Thermaceae</taxon>
        <taxon>Thermus</taxon>
    </lineage>
</organism>
<gene>
    <name evidence="1" type="primary">apgM</name>
    <name type="ordered locus">TT_C1888</name>
</gene>
<reference key="1">
    <citation type="journal article" date="2004" name="Nat. Biotechnol.">
        <title>The genome sequence of the extreme thermophile Thermus thermophilus.</title>
        <authorList>
            <person name="Henne A."/>
            <person name="Brueggemann H."/>
            <person name="Raasch C."/>
            <person name="Wiezer A."/>
            <person name="Hartsch T."/>
            <person name="Liesegang H."/>
            <person name="Johann A."/>
            <person name="Lienard T."/>
            <person name="Gohl O."/>
            <person name="Martinez-Arias R."/>
            <person name="Jacobi C."/>
            <person name="Starkuviene V."/>
            <person name="Schlenczeck S."/>
            <person name="Dencker S."/>
            <person name="Huber R."/>
            <person name="Klenk H.-P."/>
            <person name="Kramer W."/>
            <person name="Merkl R."/>
            <person name="Gottschalk G."/>
            <person name="Fritz H.-J."/>
        </authorList>
    </citation>
    <scope>NUCLEOTIDE SEQUENCE [LARGE SCALE GENOMIC DNA]</scope>
    <source>
        <strain>ATCC BAA-163 / DSM 7039 / HB27</strain>
    </source>
</reference>
<proteinExistence type="inferred from homology"/>
<protein>
    <recommendedName>
        <fullName evidence="1">Probable 2,3-bisphosphoglycerate-independent phosphoglycerate mutase</fullName>
        <shortName evidence="1">BPG-independent PGAM</shortName>
        <shortName evidence="1">Phosphoglyceromutase</shortName>
        <shortName evidence="1">aPGAM</shortName>
        <ecNumber evidence="1">5.4.2.12</ecNumber>
    </recommendedName>
</protein>
<feature type="chain" id="PRO_0000138156" description="Probable 2,3-bisphosphoglycerate-independent phosphoglycerate mutase">
    <location>
        <begin position="1"/>
        <end position="406"/>
    </location>
</feature>
<name>APGM_THET2</name>
<comment type="function">
    <text evidence="1">Catalyzes the interconversion of 2-phosphoglycerate and 3-phosphoglycerate.</text>
</comment>
<comment type="catalytic activity">
    <reaction evidence="1">
        <text>(2R)-2-phosphoglycerate = (2R)-3-phosphoglycerate</text>
        <dbReference type="Rhea" id="RHEA:15901"/>
        <dbReference type="ChEBI" id="CHEBI:58272"/>
        <dbReference type="ChEBI" id="CHEBI:58289"/>
        <dbReference type="EC" id="5.4.2.12"/>
    </reaction>
</comment>
<comment type="pathway">
    <text evidence="1">Carbohydrate degradation; glycolysis; pyruvate from D-glyceraldehyde 3-phosphate: step 3/5.</text>
</comment>
<comment type="similarity">
    <text evidence="1">Belongs to the BPG-independent phosphoglycerate mutase family. A-PGAM subfamily.</text>
</comment>
<dbReference type="EC" id="5.4.2.12" evidence="1"/>
<dbReference type="EMBL" id="AE017221">
    <property type="protein sequence ID" value="AAS82230.1"/>
    <property type="molecule type" value="Genomic_DNA"/>
</dbReference>
<dbReference type="RefSeq" id="WP_011174240.1">
    <property type="nucleotide sequence ID" value="NC_005835.1"/>
</dbReference>
<dbReference type="SMR" id="Q72GG0"/>
<dbReference type="KEGG" id="tth:TT_C1888"/>
<dbReference type="eggNOG" id="COG3635">
    <property type="taxonomic scope" value="Bacteria"/>
</dbReference>
<dbReference type="HOGENOM" id="CLU_034906_2_0_0"/>
<dbReference type="OrthoDB" id="9804453at2"/>
<dbReference type="UniPathway" id="UPA00109">
    <property type="reaction ID" value="UER00186"/>
</dbReference>
<dbReference type="Proteomes" id="UP000000592">
    <property type="component" value="Chromosome"/>
</dbReference>
<dbReference type="GO" id="GO:0046872">
    <property type="term" value="F:metal ion binding"/>
    <property type="evidence" value="ECO:0007669"/>
    <property type="project" value="InterPro"/>
</dbReference>
<dbReference type="GO" id="GO:0004619">
    <property type="term" value="F:phosphoglycerate mutase activity"/>
    <property type="evidence" value="ECO:0007669"/>
    <property type="project" value="UniProtKB-EC"/>
</dbReference>
<dbReference type="GO" id="GO:0006096">
    <property type="term" value="P:glycolytic process"/>
    <property type="evidence" value="ECO:0007669"/>
    <property type="project" value="UniProtKB-UniRule"/>
</dbReference>
<dbReference type="CDD" id="cd16011">
    <property type="entry name" value="iPGM_like"/>
    <property type="match status" value="1"/>
</dbReference>
<dbReference type="Gene3D" id="3.40.720.10">
    <property type="entry name" value="Alkaline Phosphatase, subunit A"/>
    <property type="match status" value="2"/>
</dbReference>
<dbReference type="Gene3D" id="3.30.70.2130">
    <property type="entry name" value="Metalloenzyme domain"/>
    <property type="match status" value="1"/>
</dbReference>
<dbReference type="HAMAP" id="MF_01402_B">
    <property type="entry name" value="ApgM_B"/>
    <property type="match status" value="1"/>
</dbReference>
<dbReference type="InterPro" id="IPR017850">
    <property type="entry name" value="Alkaline_phosphatase_core_sf"/>
</dbReference>
<dbReference type="InterPro" id="IPR023665">
    <property type="entry name" value="ApgAM_prokaryotes"/>
</dbReference>
<dbReference type="InterPro" id="IPR006124">
    <property type="entry name" value="Metalloenzyme"/>
</dbReference>
<dbReference type="InterPro" id="IPR004456">
    <property type="entry name" value="Pglycerate_mutase_ApgM"/>
</dbReference>
<dbReference type="InterPro" id="IPR042253">
    <property type="entry name" value="Pglycerate_mutase_ApgM_sf"/>
</dbReference>
<dbReference type="NCBIfam" id="TIGR00306">
    <property type="entry name" value="apgM"/>
    <property type="match status" value="1"/>
</dbReference>
<dbReference type="NCBIfam" id="NF003160">
    <property type="entry name" value="PRK04135.1"/>
    <property type="match status" value="1"/>
</dbReference>
<dbReference type="PANTHER" id="PTHR31209">
    <property type="entry name" value="COFACTOR-INDEPENDENT PHOSPHOGLYCERATE MUTASE"/>
    <property type="match status" value="1"/>
</dbReference>
<dbReference type="PANTHER" id="PTHR31209:SF0">
    <property type="entry name" value="METALLOENZYME DOMAIN-CONTAINING PROTEIN"/>
    <property type="match status" value="1"/>
</dbReference>
<dbReference type="Pfam" id="PF01676">
    <property type="entry name" value="Metalloenzyme"/>
    <property type="match status" value="1"/>
</dbReference>
<dbReference type="Pfam" id="PF10143">
    <property type="entry name" value="PhosphMutase"/>
    <property type="match status" value="1"/>
</dbReference>
<dbReference type="PIRSF" id="PIRSF006392">
    <property type="entry name" value="IPGAM_arch"/>
    <property type="match status" value="1"/>
</dbReference>
<dbReference type="SUPFAM" id="SSF53649">
    <property type="entry name" value="Alkaline phosphatase-like"/>
    <property type="match status" value="1"/>
</dbReference>
<accession>Q72GG0</accession>
<evidence type="ECO:0000255" key="1">
    <source>
        <dbReference type="HAMAP-Rule" id="MF_01402"/>
    </source>
</evidence>
<sequence length="406" mass="44283">MDLFPVLKELAQKTPSKILLIVLDGVGGLPLEPGGPTELEAAKTPNLDRLAEESALGLLTPVYPGLAPGSGPGHLALFGYDPFRYVVGRGALSALGLGADFREGDVALRGNFATLDPEGKVVDRRAGRPPTEENQRVVAKLKEAIPRIEDVEVHFYTESEHRFLVVLRGEGLGDAVTDTDPQKTGLPPLKAKALDEASERTARLVNLLSERIREVLKDEPRMNGALFRGASKKPSFPRMQEVYKLTPAAIASYPMYKGLASLVGMEVLPVEGEGDALEGKLKALKENWGRYDFFYFHVKKTDAMGEDGNFHGKVEKVELFDALLPEILALGPDVLAITGDHSTPALLKAHSWHPVPLLLKAPYLRADEARRFTEREAQRGSLGHLRGMELMPLLLAHAGKLLKYGA</sequence>